<name>XERDL_STRPJ</name>
<reference key="1">
    <citation type="journal article" date="2009" name="J. Bacteriol.">
        <title>Role of conjugative elements in the evolution of the multidrug-resistant pandemic clone Streptococcus pneumoniae Spain23F ST81.</title>
        <authorList>
            <person name="Croucher N.J."/>
            <person name="Walker D."/>
            <person name="Romero P."/>
            <person name="Lennard N."/>
            <person name="Paterson G.K."/>
            <person name="Bason N.C."/>
            <person name="Mitchell A.M."/>
            <person name="Quail M.A."/>
            <person name="Andrew P.W."/>
            <person name="Parkhill J."/>
            <person name="Bentley S.D."/>
            <person name="Mitchell T.J."/>
        </authorList>
    </citation>
    <scope>NUCLEOTIDE SEQUENCE [LARGE SCALE GENOMIC DNA]</scope>
    <source>
        <strain>ATCC 700669 / Spain 23F-1</strain>
    </source>
</reference>
<organism>
    <name type="scientific">Streptococcus pneumoniae (strain ATCC 700669 / Spain 23F-1)</name>
    <dbReference type="NCBI Taxonomy" id="561276"/>
    <lineage>
        <taxon>Bacteria</taxon>
        <taxon>Bacillati</taxon>
        <taxon>Bacillota</taxon>
        <taxon>Bacilli</taxon>
        <taxon>Lactobacillales</taxon>
        <taxon>Streptococcaceae</taxon>
        <taxon>Streptococcus</taxon>
    </lineage>
</organism>
<evidence type="ECO:0000255" key="1">
    <source>
        <dbReference type="HAMAP-Rule" id="MF_01817"/>
    </source>
</evidence>
<evidence type="ECO:0000255" key="2">
    <source>
        <dbReference type="PROSITE-ProRule" id="PRU01246"/>
    </source>
</evidence>
<evidence type="ECO:0000255" key="3">
    <source>
        <dbReference type="PROSITE-ProRule" id="PRU01248"/>
    </source>
</evidence>
<dbReference type="EMBL" id="FM211187">
    <property type="protein sequence ID" value="CAR69652.1"/>
    <property type="molecule type" value="Genomic_DNA"/>
</dbReference>
<dbReference type="SMR" id="B8ZNI1"/>
<dbReference type="KEGG" id="sne:SPN23F18900"/>
<dbReference type="HOGENOM" id="CLU_1128554_0_0_9"/>
<dbReference type="GO" id="GO:0005737">
    <property type="term" value="C:cytoplasm"/>
    <property type="evidence" value="ECO:0007669"/>
    <property type="project" value="UniProtKB-SubCell"/>
</dbReference>
<dbReference type="GO" id="GO:0003677">
    <property type="term" value="F:DNA binding"/>
    <property type="evidence" value="ECO:0007669"/>
    <property type="project" value="UniProtKB-KW"/>
</dbReference>
<dbReference type="GO" id="GO:0009037">
    <property type="term" value="F:tyrosine-based site-specific recombinase activity"/>
    <property type="evidence" value="ECO:0007669"/>
    <property type="project" value="UniProtKB-UniRule"/>
</dbReference>
<dbReference type="GO" id="GO:0006313">
    <property type="term" value="P:DNA transposition"/>
    <property type="evidence" value="ECO:0007669"/>
    <property type="project" value="UniProtKB-UniRule"/>
</dbReference>
<dbReference type="CDD" id="cd01190">
    <property type="entry name" value="INT_StrepXerD_C_like"/>
    <property type="match status" value="1"/>
</dbReference>
<dbReference type="Gene3D" id="1.10.150.130">
    <property type="match status" value="1"/>
</dbReference>
<dbReference type="Gene3D" id="1.10.443.10">
    <property type="entry name" value="Intergrase catalytic core"/>
    <property type="match status" value="1"/>
</dbReference>
<dbReference type="HAMAP" id="MF_01817">
    <property type="entry name" value="Recomb_XerD_like"/>
    <property type="match status" value="1"/>
</dbReference>
<dbReference type="InterPro" id="IPR044068">
    <property type="entry name" value="CB"/>
</dbReference>
<dbReference type="InterPro" id="IPR011010">
    <property type="entry name" value="DNA_brk_join_enz"/>
</dbReference>
<dbReference type="InterPro" id="IPR013762">
    <property type="entry name" value="Integrase-like_cat_sf"/>
</dbReference>
<dbReference type="InterPro" id="IPR002104">
    <property type="entry name" value="Integrase_catalytic"/>
</dbReference>
<dbReference type="InterPro" id="IPR010998">
    <property type="entry name" value="Integrase_recombinase_N"/>
</dbReference>
<dbReference type="InterPro" id="IPR004107">
    <property type="entry name" value="Integrase_SAM-like_N"/>
</dbReference>
<dbReference type="InterPro" id="IPR020876">
    <property type="entry name" value="Tyrosine_recombinase_XerD-like"/>
</dbReference>
<dbReference type="NCBIfam" id="NF002685">
    <property type="entry name" value="PRK02436.1"/>
    <property type="match status" value="1"/>
</dbReference>
<dbReference type="Pfam" id="PF02899">
    <property type="entry name" value="Phage_int_SAM_1"/>
    <property type="match status" value="1"/>
</dbReference>
<dbReference type="Pfam" id="PF00589">
    <property type="entry name" value="Phage_integrase"/>
    <property type="match status" value="1"/>
</dbReference>
<dbReference type="SUPFAM" id="SSF56349">
    <property type="entry name" value="DNA breaking-rejoining enzymes"/>
    <property type="match status" value="1"/>
</dbReference>
<dbReference type="PROSITE" id="PS51900">
    <property type="entry name" value="CB"/>
    <property type="match status" value="1"/>
</dbReference>
<dbReference type="PROSITE" id="PS51898">
    <property type="entry name" value="TYR_RECOMBINASE"/>
    <property type="match status" value="1"/>
</dbReference>
<protein>
    <recommendedName>
        <fullName evidence="1">Tyrosine recombinase XerD-like</fullName>
    </recommendedName>
</protein>
<gene>
    <name type="ordered locus">SPN23F18900</name>
</gene>
<accession>B8ZNI1</accession>
<feature type="chain" id="PRO_1000187923" description="Tyrosine recombinase XerD-like">
    <location>
        <begin position="1"/>
        <end position="244"/>
    </location>
</feature>
<feature type="domain" description="Core-binding (CB)" evidence="3">
    <location>
        <begin position="1"/>
        <end position="73"/>
    </location>
</feature>
<feature type="domain" description="Tyr recombinase" evidence="2">
    <location>
        <begin position="90"/>
        <end position="244"/>
    </location>
</feature>
<feature type="active site" evidence="2">
    <location>
        <position position="150"/>
    </location>
</feature>
<feature type="active site" evidence="2">
    <location>
        <position position="211"/>
    </location>
</feature>
<feature type="active site" description="O-(3'-phospho-DNA)-tyrosine intermediate" evidence="2">
    <location>
        <position position="243"/>
    </location>
</feature>
<sequence length="244" mass="28473">MRDRISAFLEEKQGLSVNSKQSYKYDLEQFLDMVGERISETSLKIYQAQLANLKISAQKRKISACNQFLYFLYQKGEVDSFYRLELAKQAEKKTEKPEILYLDSFWQESDHPEGRLLALLILEMGLLPSEILAIKVADINLDFQVLRISKASQQRIVTIPTALLSELEPLMGQTYLFERGEKPYSRQWAFRQLESFVKEKGFPSLSAQVLREQFILRQIENKVDLYEIAKKLGLKTVLTLEKYR</sequence>
<keyword id="KW-0963">Cytoplasm</keyword>
<keyword id="KW-0229">DNA integration</keyword>
<keyword id="KW-0233">DNA recombination</keyword>
<keyword id="KW-0238">DNA-binding</keyword>
<proteinExistence type="inferred from homology"/>
<comment type="function">
    <text evidence="1">Putative tyrosine recombinase. Not involved in the cutting and rejoining of the recombining DNA molecules on dif(SL) site.</text>
</comment>
<comment type="subcellular location">
    <subcellularLocation>
        <location evidence="1">Cytoplasm</location>
    </subcellularLocation>
</comment>
<comment type="similarity">
    <text evidence="1">Belongs to the 'phage' integrase family. XerD-like subfamily.</text>
</comment>